<reference key="1">
    <citation type="journal article" date="1995" name="Plant Mol. Biol. Rep.">
        <title>The chloroplast genome of a chlorophyll a+c-containing alga, Odontella sinensis.</title>
        <authorList>
            <person name="Kowallik K.V."/>
            <person name="Stoebe B."/>
            <person name="Schaffran I."/>
            <person name="Kroth-Pancic P."/>
            <person name="Freier U."/>
        </authorList>
    </citation>
    <scope>NUCLEOTIDE SEQUENCE [LARGE SCALE GENOMIC DNA]</scope>
</reference>
<organism>
    <name type="scientific">Trieres chinensis</name>
    <name type="common">Marine centric diatom</name>
    <name type="synonym">Odontella sinensis</name>
    <dbReference type="NCBI Taxonomy" id="1514140"/>
    <lineage>
        <taxon>Eukaryota</taxon>
        <taxon>Sar</taxon>
        <taxon>Stramenopiles</taxon>
        <taxon>Ochrophyta</taxon>
        <taxon>Bacillariophyta</taxon>
        <taxon>Mediophyceae</taxon>
        <taxon>Biddulphiophycidae</taxon>
        <taxon>Eupodiscales</taxon>
        <taxon>Parodontellaceae</taxon>
        <taxon>Trieres</taxon>
    </lineage>
</organism>
<proteinExistence type="inferred from homology"/>
<accession>P49482</accession>
<geneLocation type="chloroplast"/>
<dbReference type="EMBL" id="Z67753">
    <property type="protein sequence ID" value="CAA91673.1"/>
    <property type="molecule type" value="Genomic_DNA"/>
</dbReference>
<dbReference type="PIR" id="S78300">
    <property type="entry name" value="S78300"/>
</dbReference>
<dbReference type="RefSeq" id="NP_043641.1">
    <property type="nucleotide sequence ID" value="NC_001713.1"/>
</dbReference>
<dbReference type="SMR" id="P49482"/>
<dbReference type="GeneID" id="801814"/>
<dbReference type="GO" id="GO:0009535">
    <property type="term" value="C:chloroplast thylakoid membrane"/>
    <property type="evidence" value="ECO:0007669"/>
    <property type="project" value="UniProtKB-SubCell"/>
</dbReference>
<dbReference type="GO" id="GO:0009538">
    <property type="term" value="C:photosystem I reaction center"/>
    <property type="evidence" value="ECO:0007669"/>
    <property type="project" value="InterPro"/>
</dbReference>
<dbReference type="GO" id="GO:0015979">
    <property type="term" value="P:photosynthesis"/>
    <property type="evidence" value="ECO:0007669"/>
    <property type="project" value="UniProtKB-UniRule"/>
</dbReference>
<dbReference type="Gene3D" id="2.30.30.50">
    <property type="match status" value="1"/>
</dbReference>
<dbReference type="HAMAP" id="MF_00613">
    <property type="entry name" value="PSI_PsaE"/>
    <property type="match status" value="1"/>
</dbReference>
<dbReference type="InterPro" id="IPR008990">
    <property type="entry name" value="Elect_transpt_acc-like_dom_sf"/>
</dbReference>
<dbReference type="InterPro" id="IPR003375">
    <property type="entry name" value="PSI_PsaE"/>
</dbReference>
<dbReference type="NCBIfam" id="NF002745">
    <property type="entry name" value="PRK02749.1"/>
    <property type="match status" value="1"/>
</dbReference>
<dbReference type="PANTHER" id="PTHR34549">
    <property type="entry name" value="PHOTOSYSTEM I REACTION CENTER SUBUNIT IV A, CHLOROPLASTIC-RELATED"/>
    <property type="match status" value="1"/>
</dbReference>
<dbReference type="PANTHER" id="PTHR34549:SF2">
    <property type="entry name" value="PHOTOSYSTEM I SUBUNIT IV"/>
    <property type="match status" value="1"/>
</dbReference>
<dbReference type="Pfam" id="PF02427">
    <property type="entry name" value="PSI_PsaE"/>
    <property type="match status" value="1"/>
</dbReference>
<dbReference type="SUPFAM" id="SSF50090">
    <property type="entry name" value="Electron transport accessory proteins"/>
    <property type="match status" value="1"/>
</dbReference>
<name>PSAE_TRICV</name>
<sequence length="71" mass="8086">MISRGSKVRILRKESYWFNQVGTIATIDQSGIRYPAVVRFENVNYSGTNTNNFALEELIEVSEVETKSKEA</sequence>
<protein>
    <recommendedName>
        <fullName>Photosystem I reaction center subunit IV</fullName>
        <shortName>PSI-E</shortName>
    </recommendedName>
</protein>
<keyword id="KW-0150">Chloroplast</keyword>
<keyword id="KW-0472">Membrane</keyword>
<keyword id="KW-0602">Photosynthesis</keyword>
<keyword id="KW-0603">Photosystem I</keyword>
<keyword id="KW-0934">Plastid</keyword>
<keyword id="KW-0793">Thylakoid</keyword>
<evidence type="ECO:0000250" key="1"/>
<evidence type="ECO:0000305" key="2"/>
<gene>
    <name type="primary">psaE</name>
</gene>
<comment type="function">
    <text evidence="1">Stabilizes the interaction between PsaC and the PSI core, assists the docking of the ferredoxin to PSI and interacts with ferredoxin-NADP oxidoreductase.</text>
</comment>
<comment type="subcellular location">
    <subcellularLocation>
        <location evidence="1">Plastid</location>
        <location evidence="1">Chloroplast thylakoid membrane</location>
        <topology evidence="1">Peripheral membrane protein</topology>
    </subcellularLocation>
</comment>
<comment type="similarity">
    <text evidence="2">Belongs to the PsaE family.</text>
</comment>
<feature type="chain" id="PRO_0000204396" description="Photosystem I reaction center subunit IV">
    <location>
        <begin position="1"/>
        <end position="71"/>
    </location>
</feature>